<name>RUTE_ECOHS</name>
<sequence>MNEAVSPGALSTLFTDARTHNGWRETPVSDETLRELYALMKWGPTSANCSPARIVFIRTAEGKERLRPALSSGNLQKTLTAPVTAIVAWDSEFYERLPQLFPHGDARSWFTSSPQLAEETAFRNSSMQAAYLIIACRALGLDTGPMSGFDRQHVDDAFFAGSTLKSNLLINIGYGDSSKLFARLPRLSFEEACGLL</sequence>
<protein>
    <recommendedName>
        <fullName evidence="1">Probable malonic semialdehyde reductase RutE</fullName>
        <ecNumber evidence="1">1.1.1.298</ecNumber>
    </recommendedName>
</protein>
<dbReference type="EC" id="1.1.1.298" evidence="1"/>
<dbReference type="EMBL" id="CP000802">
    <property type="protein sequence ID" value="ABV05467.1"/>
    <property type="molecule type" value="Genomic_DNA"/>
</dbReference>
<dbReference type="RefSeq" id="WP_001001189.1">
    <property type="nucleotide sequence ID" value="NC_009800.1"/>
</dbReference>
<dbReference type="SMR" id="A7ZYW3"/>
<dbReference type="KEGG" id="ecx:EcHS_A1123"/>
<dbReference type="HOGENOM" id="CLU_084441_0_0_6"/>
<dbReference type="GO" id="GO:0035527">
    <property type="term" value="F:3-hydroxypropionate dehydrogenase (NADP+) activity"/>
    <property type="evidence" value="ECO:0007669"/>
    <property type="project" value="UniProtKB-UniRule"/>
</dbReference>
<dbReference type="GO" id="GO:0019740">
    <property type="term" value="P:nitrogen utilization"/>
    <property type="evidence" value="ECO:0007669"/>
    <property type="project" value="UniProtKB-UniRule"/>
</dbReference>
<dbReference type="GO" id="GO:0006212">
    <property type="term" value="P:uracil catabolic process"/>
    <property type="evidence" value="ECO:0007669"/>
    <property type="project" value="UniProtKB-UniRule"/>
</dbReference>
<dbReference type="CDD" id="cd02148">
    <property type="entry name" value="RutE-like"/>
    <property type="match status" value="1"/>
</dbReference>
<dbReference type="FunFam" id="3.40.109.10:FF:000003">
    <property type="entry name" value="Probable malonic semialdehyde reductase RutE"/>
    <property type="match status" value="1"/>
</dbReference>
<dbReference type="Gene3D" id="3.40.109.10">
    <property type="entry name" value="NADH Oxidase"/>
    <property type="match status" value="1"/>
</dbReference>
<dbReference type="HAMAP" id="MF_01204">
    <property type="entry name" value="Oxidoreductase_RutE_HadB"/>
    <property type="match status" value="1"/>
</dbReference>
<dbReference type="InterPro" id="IPR029479">
    <property type="entry name" value="Nitroreductase"/>
</dbReference>
<dbReference type="InterPro" id="IPR000415">
    <property type="entry name" value="Nitroreductase-like"/>
</dbReference>
<dbReference type="InterPro" id="IPR050461">
    <property type="entry name" value="Nitroreductase_HadB/RutE"/>
</dbReference>
<dbReference type="InterPro" id="IPR023936">
    <property type="entry name" value="RutE-like"/>
</dbReference>
<dbReference type="NCBIfam" id="NF003768">
    <property type="entry name" value="PRK05365.1"/>
    <property type="match status" value="1"/>
</dbReference>
<dbReference type="PANTHER" id="PTHR43543">
    <property type="entry name" value="MALONIC SEMIALDEHYDE REDUCTASE RUTE-RELATED"/>
    <property type="match status" value="1"/>
</dbReference>
<dbReference type="PANTHER" id="PTHR43543:SF1">
    <property type="entry name" value="MALONIC SEMIALDEHYDE REDUCTASE RUTE-RELATED"/>
    <property type="match status" value="1"/>
</dbReference>
<dbReference type="Pfam" id="PF00881">
    <property type="entry name" value="Nitroreductase"/>
    <property type="match status" value="1"/>
</dbReference>
<dbReference type="SUPFAM" id="SSF55469">
    <property type="entry name" value="FMN-dependent nitroreductase-like"/>
    <property type="match status" value="1"/>
</dbReference>
<gene>
    <name evidence="1" type="primary">rutE</name>
    <name type="ordered locus">EcHS_A1123</name>
</gene>
<accession>A7ZYW3</accession>
<feature type="chain" id="PRO_1000066135" description="Probable malonic semialdehyde reductase RutE">
    <location>
        <begin position="1"/>
        <end position="196"/>
    </location>
</feature>
<keyword id="KW-0285">Flavoprotein</keyword>
<keyword id="KW-0288">FMN</keyword>
<keyword id="KW-0520">NAD</keyword>
<keyword id="KW-0521">NADP</keyword>
<keyword id="KW-0560">Oxidoreductase</keyword>
<comment type="function">
    <text evidence="1">May reduce toxic product malonic semialdehyde to 3-hydroxypropionic acid, which is excreted.</text>
</comment>
<comment type="catalytic activity">
    <reaction evidence="1">
        <text>3-hydroxypropanoate + NADP(+) = 3-oxopropanoate + NADPH + H(+)</text>
        <dbReference type="Rhea" id="RHEA:26438"/>
        <dbReference type="ChEBI" id="CHEBI:15378"/>
        <dbReference type="ChEBI" id="CHEBI:16510"/>
        <dbReference type="ChEBI" id="CHEBI:33190"/>
        <dbReference type="ChEBI" id="CHEBI:57783"/>
        <dbReference type="ChEBI" id="CHEBI:58349"/>
        <dbReference type="EC" id="1.1.1.298"/>
    </reaction>
</comment>
<comment type="cofactor">
    <cofactor evidence="1">
        <name>FMN</name>
        <dbReference type="ChEBI" id="CHEBI:58210"/>
    </cofactor>
</comment>
<comment type="induction">
    <text evidence="1">Up-regulated by the nitrogen regulatory protein C (NtrC also called GlnG) and repressed by RutR.</text>
</comment>
<comment type="similarity">
    <text evidence="1">Belongs to the nitroreductase family. HadB/RutE subfamily.</text>
</comment>
<organism>
    <name type="scientific">Escherichia coli O9:H4 (strain HS)</name>
    <dbReference type="NCBI Taxonomy" id="331112"/>
    <lineage>
        <taxon>Bacteria</taxon>
        <taxon>Pseudomonadati</taxon>
        <taxon>Pseudomonadota</taxon>
        <taxon>Gammaproteobacteria</taxon>
        <taxon>Enterobacterales</taxon>
        <taxon>Enterobacteriaceae</taxon>
        <taxon>Escherichia</taxon>
    </lineage>
</organism>
<reference key="1">
    <citation type="journal article" date="2008" name="J. Bacteriol.">
        <title>The pangenome structure of Escherichia coli: comparative genomic analysis of E. coli commensal and pathogenic isolates.</title>
        <authorList>
            <person name="Rasko D.A."/>
            <person name="Rosovitz M.J."/>
            <person name="Myers G.S.A."/>
            <person name="Mongodin E.F."/>
            <person name="Fricke W.F."/>
            <person name="Gajer P."/>
            <person name="Crabtree J."/>
            <person name="Sebaihia M."/>
            <person name="Thomson N.R."/>
            <person name="Chaudhuri R."/>
            <person name="Henderson I.R."/>
            <person name="Sperandio V."/>
            <person name="Ravel J."/>
        </authorList>
    </citation>
    <scope>NUCLEOTIDE SEQUENCE [LARGE SCALE GENOMIC DNA]</scope>
    <source>
        <strain>HS</strain>
    </source>
</reference>
<proteinExistence type="inferred from homology"/>
<evidence type="ECO:0000255" key="1">
    <source>
        <dbReference type="HAMAP-Rule" id="MF_01204"/>
    </source>
</evidence>